<organism>
    <name type="scientific">Bacillus thuringiensis subsp. konkukian (strain 97-27)</name>
    <dbReference type="NCBI Taxonomy" id="281309"/>
    <lineage>
        <taxon>Bacteria</taxon>
        <taxon>Bacillati</taxon>
        <taxon>Bacillota</taxon>
        <taxon>Bacilli</taxon>
        <taxon>Bacillales</taxon>
        <taxon>Bacillaceae</taxon>
        <taxon>Bacillus</taxon>
        <taxon>Bacillus cereus group</taxon>
    </lineage>
</organism>
<name>RS15_BACHK</name>
<keyword id="KW-0687">Ribonucleoprotein</keyword>
<keyword id="KW-0689">Ribosomal protein</keyword>
<keyword id="KW-0694">RNA-binding</keyword>
<keyword id="KW-0699">rRNA-binding</keyword>
<feature type="chain" id="PRO_0000115382" description="Small ribosomal subunit protein uS15">
    <location>
        <begin position="1"/>
        <end position="89"/>
    </location>
</feature>
<proteinExistence type="inferred from homology"/>
<evidence type="ECO:0000255" key="1">
    <source>
        <dbReference type="HAMAP-Rule" id="MF_01343"/>
    </source>
</evidence>
<evidence type="ECO:0000305" key="2"/>
<accession>Q6HF07</accession>
<dbReference type="EMBL" id="AE017355">
    <property type="protein sequence ID" value="AAT60589.1"/>
    <property type="molecule type" value="Genomic_DNA"/>
</dbReference>
<dbReference type="RefSeq" id="WP_001229392.1">
    <property type="nucleotide sequence ID" value="NC_005957.1"/>
</dbReference>
<dbReference type="RefSeq" id="YP_037869.1">
    <property type="nucleotide sequence ID" value="NC_005957.1"/>
</dbReference>
<dbReference type="SMR" id="Q6HF07"/>
<dbReference type="GeneID" id="93007304"/>
<dbReference type="KEGG" id="btk:BT9727_3549"/>
<dbReference type="PATRIC" id="fig|281309.8.peg.3786"/>
<dbReference type="HOGENOM" id="CLU_148518_0_0_9"/>
<dbReference type="PRO" id="PR:Q6HF07"/>
<dbReference type="Proteomes" id="UP000001301">
    <property type="component" value="Chromosome"/>
</dbReference>
<dbReference type="GO" id="GO:0022627">
    <property type="term" value="C:cytosolic small ribosomal subunit"/>
    <property type="evidence" value="ECO:0007669"/>
    <property type="project" value="TreeGrafter"/>
</dbReference>
<dbReference type="GO" id="GO:0019843">
    <property type="term" value="F:rRNA binding"/>
    <property type="evidence" value="ECO:0007669"/>
    <property type="project" value="UniProtKB-UniRule"/>
</dbReference>
<dbReference type="GO" id="GO:0003735">
    <property type="term" value="F:structural constituent of ribosome"/>
    <property type="evidence" value="ECO:0007669"/>
    <property type="project" value="InterPro"/>
</dbReference>
<dbReference type="GO" id="GO:0006412">
    <property type="term" value="P:translation"/>
    <property type="evidence" value="ECO:0007669"/>
    <property type="project" value="UniProtKB-UniRule"/>
</dbReference>
<dbReference type="CDD" id="cd00353">
    <property type="entry name" value="Ribosomal_S15p_S13e"/>
    <property type="match status" value="1"/>
</dbReference>
<dbReference type="FunFam" id="1.10.287.10:FF:000002">
    <property type="entry name" value="30S ribosomal protein S15"/>
    <property type="match status" value="1"/>
</dbReference>
<dbReference type="Gene3D" id="6.10.250.3130">
    <property type="match status" value="1"/>
</dbReference>
<dbReference type="Gene3D" id="1.10.287.10">
    <property type="entry name" value="S15/NS1, RNA-binding"/>
    <property type="match status" value="1"/>
</dbReference>
<dbReference type="HAMAP" id="MF_01343_B">
    <property type="entry name" value="Ribosomal_uS15_B"/>
    <property type="match status" value="1"/>
</dbReference>
<dbReference type="InterPro" id="IPR000589">
    <property type="entry name" value="Ribosomal_uS15"/>
</dbReference>
<dbReference type="InterPro" id="IPR005290">
    <property type="entry name" value="Ribosomal_uS15_bac-type"/>
</dbReference>
<dbReference type="InterPro" id="IPR009068">
    <property type="entry name" value="uS15_NS1_RNA-bd_sf"/>
</dbReference>
<dbReference type="NCBIfam" id="TIGR00952">
    <property type="entry name" value="S15_bact"/>
    <property type="match status" value="1"/>
</dbReference>
<dbReference type="PANTHER" id="PTHR23321">
    <property type="entry name" value="RIBOSOMAL PROTEIN S15, BACTERIAL AND ORGANELLAR"/>
    <property type="match status" value="1"/>
</dbReference>
<dbReference type="PANTHER" id="PTHR23321:SF26">
    <property type="entry name" value="SMALL RIBOSOMAL SUBUNIT PROTEIN US15M"/>
    <property type="match status" value="1"/>
</dbReference>
<dbReference type="Pfam" id="PF00312">
    <property type="entry name" value="Ribosomal_S15"/>
    <property type="match status" value="1"/>
</dbReference>
<dbReference type="SMART" id="SM01387">
    <property type="entry name" value="Ribosomal_S15"/>
    <property type="match status" value="1"/>
</dbReference>
<dbReference type="SUPFAM" id="SSF47060">
    <property type="entry name" value="S15/NS1 RNA-binding domain"/>
    <property type="match status" value="1"/>
</dbReference>
<dbReference type="PROSITE" id="PS00362">
    <property type="entry name" value="RIBOSOMAL_S15"/>
    <property type="match status" value="1"/>
</dbReference>
<reference key="1">
    <citation type="journal article" date="2006" name="J. Bacteriol.">
        <title>Pathogenomic sequence analysis of Bacillus cereus and Bacillus thuringiensis isolates closely related to Bacillus anthracis.</title>
        <authorList>
            <person name="Han C.S."/>
            <person name="Xie G."/>
            <person name="Challacombe J.F."/>
            <person name="Altherr M.R."/>
            <person name="Bhotika S.S."/>
            <person name="Bruce D."/>
            <person name="Campbell C.S."/>
            <person name="Campbell M.L."/>
            <person name="Chen J."/>
            <person name="Chertkov O."/>
            <person name="Cleland C."/>
            <person name="Dimitrijevic M."/>
            <person name="Doggett N.A."/>
            <person name="Fawcett J.J."/>
            <person name="Glavina T."/>
            <person name="Goodwin L.A."/>
            <person name="Hill K.K."/>
            <person name="Hitchcock P."/>
            <person name="Jackson P.J."/>
            <person name="Keim P."/>
            <person name="Kewalramani A.R."/>
            <person name="Longmire J."/>
            <person name="Lucas S."/>
            <person name="Malfatti S."/>
            <person name="McMurry K."/>
            <person name="Meincke L.J."/>
            <person name="Misra M."/>
            <person name="Moseman B.L."/>
            <person name="Mundt M."/>
            <person name="Munk A.C."/>
            <person name="Okinaka R.T."/>
            <person name="Parson-Quintana B."/>
            <person name="Reilly L.P."/>
            <person name="Richardson P."/>
            <person name="Robinson D.L."/>
            <person name="Rubin E."/>
            <person name="Saunders E."/>
            <person name="Tapia R."/>
            <person name="Tesmer J.G."/>
            <person name="Thayer N."/>
            <person name="Thompson L.S."/>
            <person name="Tice H."/>
            <person name="Ticknor L.O."/>
            <person name="Wills P.L."/>
            <person name="Brettin T.S."/>
            <person name="Gilna P."/>
        </authorList>
    </citation>
    <scope>NUCLEOTIDE SEQUENCE [LARGE SCALE GENOMIC DNA]</scope>
    <source>
        <strain>97-27</strain>
    </source>
</reference>
<sequence length="89" mass="10560">MALTQERKNEIIAQFRTHETDTGSPEVQIAVLTEQINTLNEHLRTHKKDHHSRRGLLKMVGKRRNLLTYLRNSDITRYRELITKLGLRR</sequence>
<gene>
    <name evidence="1" type="primary">rpsO</name>
    <name type="ordered locus">BT9727_3549</name>
</gene>
<protein>
    <recommendedName>
        <fullName evidence="1">Small ribosomal subunit protein uS15</fullName>
    </recommendedName>
    <alternativeName>
        <fullName evidence="2">30S ribosomal protein S15</fullName>
    </alternativeName>
</protein>
<comment type="function">
    <text evidence="1">One of the primary rRNA binding proteins, it binds directly to 16S rRNA where it helps nucleate assembly of the platform of the 30S subunit by binding and bridging several RNA helices of the 16S rRNA.</text>
</comment>
<comment type="function">
    <text evidence="1">Forms an intersubunit bridge (bridge B4) with the 23S rRNA of the 50S subunit in the ribosome.</text>
</comment>
<comment type="subunit">
    <text evidence="1">Part of the 30S ribosomal subunit. Forms a bridge to the 50S subunit in the 70S ribosome, contacting the 23S rRNA.</text>
</comment>
<comment type="similarity">
    <text evidence="1">Belongs to the universal ribosomal protein uS15 family.</text>
</comment>